<protein>
    <recommendedName>
        <fullName>Phosphoglucomutase</fullName>
        <shortName>PGM</shortName>
        <ecNumber>5.4.2.2</ecNumber>
    </recommendedName>
    <alternativeName>
        <fullName>Alpha-phosphoglucomutase</fullName>
    </alternativeName>
    <alternativeName>
        <fullName>Glucose phosphomutase</fullName>
    </alternativeName>
</protein>
<comment type="function">
    <text evidence="1">Catalyzes the interconversion between glucose-6-phosphate and alpha-glucose-1-phosphate. This is the first step in the biosynthesis of diglucosyl-diacylglycerol (Glc2-DAG), i.e. the predominant glycolipid found in the S.aureus membrane, which is also used as a membrane anchor for lipoteichoic acid (LTA) (By similarity).</text>
</comment>
<comment type="catalytic activity">
    <reaction>
        <text>alpha-D-glucose 1-phosphate = alpha-D-glucose 6-phosphate</text>
        <dbReference type="Rhea" id="RHEA:23536"/>
        <dbReference type="ChEBI" id="CHEBI:58225"/>
        <dbReference type="ChEBI" id="CHEBI:58601"/>
        <dbReference type="EC" id="5.4.2.2"/>
    </reaction>
</comment>
<comment type="cofactor">
    <cofactor evidence="1">
        <name>Mg(2+)</name>
        <dbReference type="ChEBI" id="CHEBI:18420"/>
    </cofactor>
    <text evidence="1">Binds 1 Mg(2+) ion per subunit.</text>
</comment>
<comment type="pathway">
    <text>Glycolipid metabolism; diglucosyl-diacylglycerol biosynthesis.</text>
</comment>
<comment type="similarity">
    <text evidence="2">Belongs to the phosphohexose mutase family.</text>
</comment>
<comment type="sequence caution" evidence="2">
    <conflict type="erroneous initiation">
        <sequence resource="EMBL-CDS" id="CAI82059"/>
    </conflict>
</comment>
<sequence length="552" mass="62148">MKGCLATMDKELWIERANDSLVKHFYEQQSGIEQRDGFESKLTFGTAGIRGKFGLGEGRLNKFTIEKLALGLARYLNAQTNNPTIVIHYDIRHLSTEFAQIIANVLANHQITVYLPDTYKTTPELSFAVRNLNTAAGIMITASHNPKDYNGIKVYGSDGAQLSTDASELASRYIEEVGDPLQIDIPISKQNTSYIKPFPKSVTDDYMKHIQNMIGYIPKSDLQVVFTSLHGTSVPIVPELLQSLNFNQFNLVEAQCKPDPNFSSVQSANPEDHRAFDQAVELANKSHADLLISTDPDADRLGIAECDAHGHITYFNGNQIGALLLNYRIQQTSQLRHRLMIQSIVSSELTKSLARYNNVEYKEVLTGFKFIAQEIRQLDDHQNMIFAFEESYGFLSEPFVRDKDAVQIVPLIIKYASELKLYGKTLKDALEQIYQTVGRHEDTLFSHTLEGLEGKKKINAIMTKFRSNPPQEIQGLKVKAIEDYLTSEVYQLDKDTTSQINSPKSNVIRVLFDEGFIALRPSGTEPKIKLYVSLKCPNFDDVAQKINAMIFS</sequence>
<gene>
    <name type="primary">pgcA</name>
    <name type="ordered locus">SAB2371</name>
</gene>
<organism>
    <name type="scientific">Staphylococcus aureus (strain bovine RF122 / ET3-1)</name>
    <dbReference type="NCBI Taxonomy" id="273036"/>
    <lineage>
        <taxon>Bacteria</taxon>
        <taxon>Bacillati</taxon>
        <taxon>Bacillota</taxon>
        <taxon>Bacilli</taxon>
        <taxon>Bacillales</taxon>
        <taxon>Staphylococcaceae</taxon>
        <taxon>Staphylococcus</taxon>
    </lineage>
</organism>
<accession>Q2YW66</accession>
<keyword id="KW-0119">Carbohydrate metabolism</keyword>
<keyword id="KW-0313">Glucose metabolism</keyword>
<keyword id="KW-0413">Isomerase</keyword>
<keyword id="KW-0460">Magnesium</keyword>
<keyword id="KW-0479">Metal-binding</keyword>
<keyword id="KW-0597">Phosphoprotein</keyword>
<feature type="chain" id="PRO_0000308338" description="Phosphoglucomutase">
    <location>
        <begin position="1"/>
        <end position="552"/>
    </location>
</feature>
<feature type="active site" description="Phosphoserine intermediate" evidence="1">
    <location>
        <position position="143"/>
    </location>
</feature>
<feature type="binding site" description="via phosphate group" evidence="1">
    <location>
        <position position="143"/>
    </location>
    <ligand>
        <name>Mg(2+)</name>
        <dbReference type="ChEBI" id="CHEBI:18420"/>
    </ligand>
</feature>
<feature type="binding site" evidence="1">
    <location>
        <position position="295"/>
    </location>
    <ligand>
        <name>Mg(2+)</name>
        <dbReference type="ChEBI" id="CHEBI:18420"/>
    </ligand>
</feature>
<feature type="binding site" evidence="1">
    <location>
        <position position="297"/>
    </location>
    <ligand>
        <name>Mg(2+)</name>
        <dbReference type="ChEBI" id="CHEBI:18420"/>
    </ligand>
</feature>
<feature type="binding site" evidence="1">
    <location>
        <position position="299"/>
    </location>
    <ligand>
        <name>Mg(2+)</name>
        <dbReference type="ChEBI" id="CHEBI:18420"/>
    </ligand>
</feature>
<name>PGCA_STAAB</name>
<evidence type="ECO:0000250" key="1"/>
<evidence type="ECO:0000305" key="2"/>
<dbReference type="EC" id="5.4.2.2"/>
<dbReference type="EMBL" id="AJ938182">
    <property type="protein sequence ID" value="CAI82059.1"/>
    <property type="status" value="ALT_INIT"/>
    <property type="molecule type" value="Genomic_DNA"/>
</dbReference>
<dbReference type="SMR" id="Q2YW66"/>
<dbReference type="KEGG" id="sab:SAB2371"/>
<dbReference type="HOGENOM" id="CLU_016950_0_0_9"/>
<dbReference type="UniPathway" id="UPA00894"/>
<dbReference type="GO" id="GO:0000287">
    <property type="term" value="F:magnesium ion binding"/>
    <property type="evidence" value="ECO:0007669"/>
    <property type="project" value="InterPro"/>
</dbReference>
<dbReference type="GO" id="GO:0004614">
    <property type="term" value="F:phosphoglucomutase activity"/>
    <property type="evidence" value="ECO:0007669"/>
    <property type="project" value="UniProtKB-EC"/>
</dbReference>
<dbReference type="GO" id="GO:0008973">
    <property type="term" value="F:phosphopentomutase activity"/>
    <property type="evidence" value="ECO:0007669"/>
    <property type="project" value="TreeGrafter"/>
</dbReference>
<dbReference type="GO" id="GO:0009246">
    <property type="term" value="P:enterobacterial common antigen biosynthetic process"/>
    <property type="evidence" value="ECO:0007669"/>
    <property type="project" value="UniProtKB-UniPathway"/>
</dbReference>
<dbReference type="GO" id="GO:0006006">
    <property type="term" value="P:glucose metabolic process"/>
    <property type="evidence" value="ECO:0007669"/>
    <property type="project" value="UniProtKB-KW"/>
</dbReference>
<dbReference type="GO" id="GO:0006166">
    <property type="term" value="P:purine ribonucleoside salvage"/>
    <property type="evidence" value="ECO:0007669"/>
    <property type="project" value="TreeGrafter"/>
</dbReference>
<dbReference type="CDD" id="cd05799">
    <property type="entry name" value="PGM2"/>
    <property type="match status" value="1"/>
</dbReference>
<dbReference type="Gene3D" id="3.40.120.10">
    <property type="entry name" value="Alpha-D-Glucose-1,6-Bisphosphate, subunit A, domain 3"/>
    <property type="match status" value="3"/>
</dbReference>
<dbReference type="Gene3D" id="3.30.310.50">
    <property type="entry name" value="Alpha-D-phosphohexomutase, C-terminal domain"/>
    <property type="match status" value="1"/>
</dbReference>
<dbReference type="InterPro" id="IPR005844">
    <property type="entry name" value="A-D-PHexomutase_a/b/a-I"/>
</dbReference>
<dbReference type="InterPro" id="IPR016055">
    <property type="entry name" value="A-D-PHexomutase_a/b/a-I/II/III"/>
</dbReference>
<dbReference type="InterPro" id="IPR005845">
    <property type="entry name" value="A-D-PHexomutase_a/b/a-II"/>
</dbReference>
<dbReference type="InterPro" id="IPR005846">
    <property type="entry name" value="A-D-PHexomutase_a/b/a-III"/>
</dbReference>
<dbReference type="InterPro" id="IPR005843">
    <property type="entry name" value="A-D-PHexomutase_C"/>
</dbReference>
<dbReference type="InterPro" id="IPR036900">
    <property type="entry name" value="A-D-PHexomutase_C_sf"/>
</dbReference>
<dbReference type="InterPro" id="IPR016066">
    <property type="entry name" value="A-D-PHexomutase_CS"/>
</dbReference>
<dbReference type="InterPro" id="IPR005841">
    <property type="entry name" value="Alpha-D-phosphohexomutase_SF"/>
</dbReference>
<dbReference type="PANTHER" id="PTHR45745:SF1">
    <property type="entry name" value="PHOSPHOGLUCOMUTASE 2B-RELATED"/>
    <property type="match status" value="1"/>
</dbReference>
<dbReference type="PANTHER" id="PTHR45745">
    <property type="entry name" value="PHOSPHOMANNOMUTASE 45A"/>
    <property type="match status" value="1"/>
</dbReference>
<dbReference type="Pfam" id="PF02878">
    <property type="entry name" value="PGM_PMM_I"/>
    <property type="match status" value="1"/>
</dbReference>
<dbReference type="Pfam" id="PF02879">
    <property type="entry name" value="PGM_PMM_II"/>
    <property type="match status" value="1"/>
</dbReference>
<dbReference type="Pfam" id="PF02880">
    <property type="entry name" value="PGM_PMM_III"/>
    <property type="match status" value="1"/>
</dbReference>
<dbReference type="Pfam" id="PF00408">
    <property type="entry name" value="PGM_PMM_IV"/>
    <property type="match status" value="1"/>
</dbReference>
<dbReference type="PRINTS" id="PR00509">
    <property type="entry name" value="PGMPMM"/>
</dbReference>
<dbReference type="SUPFAM" id="SSF55957">
    <property type="entry name" value="Phosphoglucomutase, C-terminal domain"/>
    <property type="match status" value="1"/>
</dbReference>
<dbReference type="SUPFAM" id="SSF53738">
    <property type="entry name" value="Phosphoglucomutase, first 3 domains"/>
    <property type="match status" value="3"/>
</dbReference>
<dbReference type="PROSITE" id="PS00710">
    <property type="entry name" value="PGM_PMM"/>
    <property type="match status" value="1"/>
</dbReference>
<reference key="1">
    <citation type="journal article" date="2007" name="PLoS ONE">
        <title>Molecular correlates of host specialization in Staphylococcus aureus.</title>
        <authorList>
            <person name="Herron-Olson L."/>
            <person name="Fitzgerald J.R."/>
            <person name="Musser J.M."/>
            <person name="Kapur V."/>
        </authorList>
    </citation>
    <scope>NUCLEOTIDE SEQUENCE [LARGE SCALE GENOMIC DNA]</scope>
    <source>
        <strain>bovine RF122 / ET3-1</strain>
    </source>
</reference>
<proteinExistence type="inferred from homology"/>